<name>Y2654_STAAR</name>
<feature type="chain" id="PRO_0000094990" description="UPF0291 protein SAR2654">
    <location>
        <begin position="1"/>
        <end position="76"/>
    </location>
</feature>
<organism>
    <name type="scientific">Staphylococcus aureus (strain MRSA252)</name>
    <dbReference type="NCBI Taxonomy" id="282458"/>
    <lineage>
        <taxon>Bacteria</taxon>
        <taxon>Bacillati</taxon>
        <taxon>Bacillota</taxon>
        <taxon>Bacilli</taxon>
        <taxon>Bacillales</taxon>
        <taxon>Staphylococcaceae</taxon>
        <taxon>Staphylococcus</taxon>
    </lineage>
</organism>
<gene>
    <name type="ordered locus">SAR2654</name>
</gene>
<sequence>MKILDRINELANKEKVQPLTVAEKQEQHALRQDYLSMIRGQVLTTFSTIKVVDPIGQDVTPDKVYDLRQQYGYIQN</sequence>
<reference key="1">
    <citation type="journal article" date="2004" name="Proc. Natl. Acad. Sci. U.S.A.">
        <title>Complete genomes of two clinical Staphylococcus aureus strains: evidence for the rapid evolution of virulence and drug resistance.</title>
        <authorList>
            <person name="Holden M.T.G."/>
            <person name="Feil E.J."/>
            <person name="Lindsay J.A."/>
            <person name="Peacock S.J."/>
            <person name="Day N.P.J."/>
            <person name="Enright M.C."/>
            <person name="Foster T.J."/>
            <person name="Moore C.E."/>
            <person name="Hurst L."/>
            <person name="Atkin R."/>
            <person name="Barron A."/>
            <person name="Bason N."/>
            <person name="Bentley S.D."/>
            <person name="Chillingworth C."/>
            <person name="Chillingworth T."/>
            <person name="Churcher C."/>
            <person name="Clark L."/>
            <person name="Corton C."/>
            <person name="Cronin A."/>
            <person name="Doggett J."/>
            <person name="Dowd L."/>
            <person name="Feltwell T."/>
            <person name="Hance Z."/>
            <person name="Harris B."/>
            <person name="Hauser H."/>
            <person name="Holroyd S."/>
            <person name="Jagels K."/>
            <person name="James K.D."/>
            <person name="Lennard N."/>
            <person name="Line A."/>
            <person name="Mayes R."/>
            <person name="Moule S."/>
            <person name="Mungall K."/>
            <person name="Ormond D."/>
            <person name="Quail M.A."/>
            <person name="Rabbinowitsch E."/>
            <person name="Rutherford K.M."/>
            <person name="Sanders M."/>
            <person name="Sharp S."/>
            <person name="Simmonds M."/>
            <person name="Stevens K."/>
            <person name="Whitehead S."/>
            <person name="Barrell B.G."/>
            <person name="Spratt B.G."/>
            <person name="Parkhill J."/>
        </authorList>
    </citation>
    <scope>NUCLEOTIDE SEQUENCE [LARGE SCALE GENOMIC DNA]</scope>
    <source>
        <strain>MRSA252</strain>
    </source>
</reference>
<evidence type="ECO:0000255" key="1">
    <source>
        <dbReference type="HAMAP-Rule" id="MF_01103"/>
    </source>
</evidence>
<comment type="subcellular location">
    <subcellularLocation>
        <location evidence="1">Cytoplasm</location>
    </subcellularLocation>
</comment>
<comment type="similarity">
    <text evidence="1">Belongs to the UPF0291 family.</text>
</comment>
<accession>Q6GDM7</accession>
<dbReference type="EMBL" id="BX571856">
    <property type="protein sequence ID" value="CAG41631.1"/>
    <property type="molecule type" value="Genomic_DNA"/>
</dbReference>
<dbReference type="RefSeq" id="WP_000697134.1">
    <property type="nucleotide sequence ID" value="NC_002952.2"/>
</dbReference>
<dbReference type="SMR" id="Q6GDM7"/>
<dbReference type="KEGG" id="sar:SAR2654"/>
<dbReference type="HOGENOM" id="CLU_173137_0_2_9"/>
<dbReference type="Proteomes" id="UP000000596">
    <property type="component" value="Chromosome"/>
</dbReference>
<dbReference type="GO" id="GO:0005737">
    <property type="term" value="C:cytoplasm"/>
    <property type="evidence" value="ECO:0007669"/>
    <property type="project" value="UniProtKB-SubCell"/>
</dbReference>
<dbReference type="Gene3D" id="1.10.287.540">
    <property type="entry name" value="Helix hairpin bin"/>
    <property type="match status" value="1"/>
</dbReference>
<dbReference type="HAMAP" id="MF_01103">
    <property type="entry name" value="UPF0291"/>
    <property type="match status" value="1"/>
</dbReference>
<dbReference type="InterPro" id="IPR009242">
    <property type="entry name" value="DUF896"/>
</dbReference>
<dbReference type="PANTHER" id="PTHR37300:SF2">
    <property type="entry name" value="UPF0291 PROTEIN BC_1827"/>
    <property type="match status" value="1"/>
</dbReference>
<dbReference type="PANTHER" id="PTHR37300">
    <property type="entry name" value="UPF0291 PROTEIN CBO2609/CLC_2481"/>
    <property type="match status" value="1"/>
</dbReference>
<dbReference type="Pfam" id="PF05979">
    <property type="entry name" value="DUF896"/>
    <property type="match status" value="1"/>
</dbReference>
<dbReference type="SUPFAM" id="SSF158221">
    <property type="entry name" value="YnzC-like"/>
    <property type="match status" value="1"/>
</dbReference>
<keyword id="KW-0963">Cytoplasm</keyword>
<proteinExistence type="inferred from homology"/>
<protein>
    <recommendedName>
        <fullName evidence="1">UPF0291 protein SAR2654</fullName>
    </recommendedName>
</protein>